<name>MDTK_SALTY</name>
<protein>
    <recommendedName>
        <fullName>Multidrug resistance protein MdtK</fullName>
    </recommendedName>
    <alternativeName>
        <fullName>Multidrug-efflux transporter</fullName>
    </alternativeName>
</protein>
<dbReference type="EMBL" id="AE006468">
    <property type="protein sequence ID" value="AAL20347.1"/>
    <property type="molecule type" value="Genomic_DNA"/>
</dbReference>
<dbReference type="SMR" id="Q8ZPP2"/>
<dbReference type="STRING" id="99287.STM1425"/>
<dbReference type="PaxDb" id="99287-STM1425"/>
<dbReference type="KEGG" id="stm:STM1425"/>
<dbReference type="PATRIC" id="fig|99287.12.peg.1507"/>
<dbReference type="HOGENOM" id="CLU_012893_6_0_6"/>
<dbReference type="PhylomeDB" id="Q8ZPP2"/>
<dbReference type="BioCyc" id="SENT99287:STM1425-MONOMER"/>
<dbReference type="Proteomes" id="UP000001014">
    <property type="component" value="Chromosome"/>
</dbReference>
<dbReference type="GO" id="GO:0016020">
    <property type="term" value="C:membrane"/>
    <property type="evidence" value="ECO:0000318"/>
    <property type="project" value="GO_Central"/>
</dbReference>
<dbReference type="GO" id="GO:0005886">
    <property type="term" value="C:plasma membrane"/>
    <property type="evidence" value="ECO:0007669"/>
    <property type="project" value="UniProtKB-SubCell"/>
</dbReference>
<dbReference type="GO" id="GO:0015297">
    <property type="term" value="F:antiporter activity"/>
    <property type="evidence" value="ECO:0007669"/>
    <property type="project" value="UniProtKB-UniRule"/>
</dbReference>
<dbReference type="GO" id="GO:0042910">
    <property type="term" value="F:xenobiotic transmembrane transporter activity"/>
    <property type="evidence" value="ECO:0000318"/>
    <property type="project" value="GO_Central"/>
</dbReference>
<dbReference type="GO" id="GO:0046677">
    <property type="term" value="P:response to antibiotic"/>
    <property type="evidence" value="ECO:0000318"/>
    <property type="project" value="GO_Central"/>
</dbReference>
<dbReference type="GO" id="GO:0006814">
    <property type="term" value="P:sodium ion transport"/>
    <property type="evidence" value="ECO:0007669"/>
    <property type="project" value="UniProtKB-UniRule"/>
</dbReference>
<dbReference type="GO" id="GO:0006855">
    <property type="term" value="P:xenobiotic transmembrane transport"/>
    <property type="evidence" value="ECO:0007669"/>
    <property type="project" value="UniProtKB-UniRule"/>
</dbReference>
<dbReference type="CDD" id="cd13131">
    <property type="entry name" value="MATE_NorM_like"/>
    <property type="match status" value="1"/>
</dbReference>
<dbReference type="HAMAP" id="MF_00400">
    <property type="entry name" value="MdtK"/>
    <property type="match status" value="1"/>
</dbReference>
<dbReference type="InterPro" id="IPR002528">
    <property type="entry name" value="MATE_fam"/>
</dbReference>
<dbReference type="InterPro" id="IPR050222">
    <property type="entry name" value="MATE_MdtK"/>
</dbReference>
<dbReference type="InterPro" id="IPR048279">
    <property type="entry name" value="MdtK-like"/>
</dbReference>
<dbReference type="InterPro" id="IPR022913">
    <property type="entry name" value="Multidrug-R_MdtK"/>
</dbReference>
<dbReference type="NCBIfam" id="TIGR00797">
    <property type="entry name" value="matE"/>
    <property type="match status" value="1"/>
</dbReference>
<dbReference type="PANTHER" id="PTHR43298:SF2">
    <property type="entry name" value="FMN_FAD EXPORTER YEEO-RELATED"/>
    <property type="match status" value="1"/>
</dbReference>
<dbReference type="PANTHER" id="PTHR43298">
    <property type="entry name" value="MULTIDRUG RESISTANCE PROTEIN NORM-RELATED"/>
    <property type="match status" value="1"/>
</dbReference>
<dbReference type="Pfam" id="PF01554">
    <property type="entry name" value="MatE"/>
    <property type="match status" value="2"/>
</dbReference>
<dbReference type="PIRSF" id="PIRSF006603">
    <property type="entry name" value="DinF"/>
    <property type="match status" value="1"/>
</dbReference>
<proteinExistence type="inferred from homology"/>
<organism>
    <name type="scientific">Salmonella typhimurium (strain LT2 / SGSC1412 / ATCC 700720)</name>
    <dbReference type="NCBI Taxonomy" id="99287"/>
    <lineage>
        <taxon>Bacteria</taxon>
        <taxon>Pseudomonadati</taxon>
        <taxon>Pseudomonadota</taxon>
        <taxon>Gammaproteobacteria</taxon>
        <taxon>Enterobacterales</taxon>
        <taxon>Enterobacteriaceae</taxon>
        <taxon>Salmonella</taxon>
    </lineage>
</organism>
<feature type="chain" id="PRO_0000164190" description="Multidrug resistance protein MdtK">
    <location>
        <begin position="1"/>
        <end position="457"/>
    </location>
</feature>
<feature type="topological domain" description="Cytoplasmic" evidence="2">
    <location>
        <begin position="1"/>
        <end position="15"/>
    </location>
</feature>
<feature type="transmembrane region" description="Helical" evidence="2">
    <location>
        <begin position="16"/>
        <end position="36"/>
    </location>
</feature>
<feature type="topological domain" description="Extracellular" evidence="2">
    <location>
        <begin position="37"/>
        <end position="52"/>
    </location>
</feature>
<feature type="transmembrane region" description="Helical" evidence="2">
    <location>
        <begin position="53"/>
        <end position="73"/>
    </location>
</feature>
<feature type="topological domain" description="Cytoplasmic" evidence="2">
    <location>
        <begin position="74"/>
        <end position="92"/>
    </location>
</feature>
<feature type="transmembrane region" description="Helical" evidence="2">
    <location>
        <begin position="93"/>
        <end position="113"/>
    </location>
</feature>
<feature type="topological domain" description="Extracellular" evidence="2">
    <location>
        <begin position="114"/>
        <end position="126"/>
    </location>
</feature>
<feature type="transmembrane region" description="Helical" evidence="2">
    <location>
        <begin position="127"/>
        <end position="147"/>
    </location>
</feature>
<feature type="topological domain" description="Cytoplasmic" evidence="2">
    <location>
        <begin position="148"/>
        <end position="159"/>
    </location>
</feature>
<feature type="transmembrane region" description="Helical" evidence="2">
    <location>
        <begin position="160"/>
        <end position="180"/>
    </location>
</feature>
<feature type="topological domain" description="Extracellular" evidence="2">
    <location>
        <begin position="181"/>
        <end position="187"/>
    </location>
</feature>
<feature type="transmembrane region" description="Helical" evidence="2">
    <location>
        <begin position="188"/>
        <end position="208"/>
    </location>
</feature>
<feature type="topological domain" description="Cytoplasmic" evidence="2">
    <location>
        <begin position="209"/>
        <end position="242"/>
    </location>
</feature>
<feature type="transmembrane region" description="Helical" evidence="2">
    <location>
        <begin position="243"/>
        <end position="263"/>
    </location>
</feature>
<feature type="topological domain" description="Extracellular" evidence="2">
    <location>
        <begin position="264"/>
        <end position="275"/>
    </location>
</feature>
<feature type="transmembrane region" description="Helical" evidence="2">
    <location>
        <begin position="276"/>
        <end position="296"/>
    </location>
</feature>
<feature type="topological domain" description="Cytoplasmic" evidence="2">
    <location>
        <begin position="297"/>
        <end position="313"/>
    </location>
</feature>
<feature type="transmembrane region" description="Helical" evidence="2">
    <location>
        <begin position="314"/>
        <end position="334"/>
    </location>
</feature>
<feature type="topological domain" description="Extracellular" evidence="2">
    <location>
        <begin position="335"/>
        <end position="349"/>
    </location>
</feature>
<feature type="transmembrane region" description="Helical" evidence="2">
    <location>
        <begin position="350"/>
        <end position="370"/>
    </location>
</feature>
<feature type="topological domain" description="Cytoplasmic" evidence="2">
    <location>
        <begin position="371"/>
        <end position="386"/>
    </location>
</feature>
<feature type="transmembrane region" description="Helical" evidence="2">
    <location>
        <begin position="387"/>
        <end position="407"/>
    </location>
</feature>
<feature type="topological domain" description="Extracellular" evidence="2">
    <location>
        <begin position="408"/>
        <end position="417"/>
    </location>
</feature>
<feature type="transmembrane region" description="Helical" evidence="2">
    <location>
        <begin position="418"/>
        <end position="438"/>
    </location>
</feature>
<feature type="topological domain" description="Cytoplasmic" evidence="2">
    <location>
        <begin position="439"/>
        <end position="457"/>
    </location>
</feature>
<evidence type="ECO:0000250" key="1"/>
<evidence type="ECO:0000255" key="2"/>
<evidence type="ECO:0000305" key="3"/>
<sequence>MQKYTSEARQLLALRIPVILAQVAQTAMGFVDTVMAGGYSATDMAAVAIGTSIWLPAILFGHGLLLALTPVIAQLNGSGRRERIAHQVRQGFWLAGFVSVLVMIVLWNAGYIIRSMHNIDPALADKAVGYLRALLWGAPGYLFFQVARNQCEGLAKTKPGMVMGFLGLLVNIPVNYIFIYGHFGMPELGGIGCGVATAAVYWVMFIAMLSYIKHARSMRDIRNEKGFGKPDSVVMKRLIQLGLPIALALFFEVTLFAVVALLVSPLGIVDVAGHQIALNFSSLMFVLPMSLAAAVTIRVGYRLGQGSTLDAQTAARTGLGVGICMAVVTAIFTVTLRKHIALLYNDNPEVVALAAQLMLLAAVYQISDSIQVIGSGILRGYKDTRSIFFITFTAYWVLGLPSGYILALTDLVVDRMGPAGFWMGFIIGLTSAAVLMMLRMRYLQRQPSAIILQRAAR</sequence>
<keyword id="KW-0050">Antiport</keyword>
<keyword id="KW-0997">Cell inner membrane</keyword>
<keyword id="KW-1003">Cell membrane</keyword>
<keyword id="KW-0406">Ion transport</keyword>
<keyword id="KW-0472">Membrane</keyword>
<keyword id="KW-1185">Reference proteome</keyword>
<keyword id="KW-0915">Sodium</keyword>
<keyword id="KW-0739">Sodium transport</keyword>
<keyword id="KW-0812">Transmembrane</keyword>
<keyword id="KW-1133">Transmembrane helix</keyword>
<keyword id="KW-0813">Transport</keyword>
<gene>
    <name type="primary">mdtK</name>
    <name type="synonym">norM</name>
    <name type="ordered locus">STM1425</name>
</gene>
<comment type="function">
    <text evidence="1">Multidrug efflux pump that functions probably as a Na(+)/drug antiporter.</text>
</comment>
<comment type="subcellular location">
    <subcellularLocation>
        <location evidence="1">Cell inner membrane</location>
        <topology evidence="1">Multi-pass membrane protein</topology>
    </subcellularLocation>
</comment>
<comment type="similarity">
    <text evidence="3">Belongs to the multi antimicrobial extrusion (MATE) (TC 2.A.66.1) family. MdtK subfamily.</text>
</comment>
<reference key="1">
    <citation type="journal article" date="2001" name="Nature">
        <title>Complete genome sequence of Salmonella enterica serovar Typhimurium LT2.</title>
        <authorList>
            <person name="McClelland M."/>
            <person name="Sanderson K.E."/>
            <person name="Spieth J."/>
            <person name="Clifton S.W."/>
            <person name="Latreille P."/>
            <person name="Courtney L."/>
            <person name="Porwollik S."/>
            <person name="Ali J."/>
            <person name="Dante M."/>
            <person name="Du F."/>
            <person name="Hou S."/>
            <person name="Layman D."/>
            <person name="Leonard S."/>
            <person name="Nguyen C."/>
            <person name="Scott K."/>
            <person name="Holmes A."/>
            <person name="Grewal N."/>
            <person name="Mulvaney E."/>
            <person name="Ryan E."/>
            <person name="Sun H."/>
            <person name="Florea L."/>
            <person name="Miller W."/>
            <person name="Stoneking T."/>
            <person name="Nhan M."/>
            <person name="Waterston R."/>
            <person name="Wilson R.K."/>
        </authorList>
    </citation>
    <scope>NUCLEOTIDE SEQUENCE [LARGE SCALE GENOMIC DNA]</scope>
    <source>
        <strain>LT2 / SGSC1412 / ATCC 700720</strain>
    </source>
</reference>
<accession>Q8ZPP2</accession>